<feature type="chain" id="PRO_0000441933" description="Cytochrome b-c1 complex subunit 9" evidence="4">
    <location>
        <begin position="1"/>
        <end position="76"/>
    </location>
</feature>
<feature type="chain" id="PRO_0000342403" description="Cytochrome b-c1 complex subunit Rieske, mitochondrial">
    <location>
        <begin position="77"/>
        <end position="272"/>
    </location>
</feature>
<feature type="topological domain" description="Mitochondrial matrix" evidence="2">
    <location>
        <begin position="77"/>
        <end position="104"/>
    </location>
</feature>
<feature type="transmembrane region" description="Helical" evidence="6">
    <location>
        <begin position="105"/>
        <end position="138"/>
    </location>
</feature>
<feature type="topological domain" description="Mitochondrial intermembrane" evidence="2">
    <location>
        <begin position="139"/>
        <end position="272"/>
    </location>
</feature>
<feature type="domain" description="Rieske" evidence="5">
    <location>
        <begin position="185"/>
        <end position="270"/>
    </location>
</feature>
<feature type="binding site" evidence="6 8 9 10">
    <location>
        <position position="215"/>
    </location>
    <ligand>
        <name>[2Fe-2S] cluster</name>
        <dbReference type="ChEBI" id="CHEBI:190135"/>
    </ligand>
</feature>
<feature type="binding site" evidence="6 8 9 10">
    <location>
        <position position="217"/>
    </location>
    <ligand>
        <name>[2Fe-2S] cluster</name>
        <dbReference type="ChEBI" id="CHEBI:190135"/>
    </ligand>
</feature>
<feature type="binding site" evidence="6 8 9">
    <location>
        <position position="218"/>
    </location>
    <ligand>
        <name>[2Fe-2S] cluster</name>
        <dbReference type="ChEBI" id="CHEBI:190135"/>
    </ligand>
</feature>
<feature type="binding site" evidence="6 8 9 10">
    <location>
        <position position="234"/>
    </location>
    <ligand>
        <name>[2Fe-2S] cluster</name>
        <dbReference type="ChEBI" id="CHEBI:190135"/>
    </ligand>
</feature>
<feature type="binding site" evidence="6 8 9 10">
    <location>
        <position position="237"/>
    </location>
    <ligand>
        <name>[2Fe-2S] cluster</name>
        <dbReference type="ChEBI" id="CHEBI:190135"/>
    </ligand>
</feature>
<feature type="binding site" evidence="6 8 9 10">
    <location>
        <position position="239"/>
    </location>
    <ligand>
        <name>[2Fe-2S] cluster</name>
        <dbReference type="ChEBI" id="CHEBI:190135"/>
    </ligand>
</feature>
<feature type="disulfide bond" evidence="6 8 9 10">
    <location>
        <begin position="220"/>
        <end position="236"/>
    </location>
</feature>
<feature type="turn" evidence="13">
    <location>
        <begin position="51"/>
        <end position="55"/>
    </location>
</feature>
<feature type="strand" evidence="13">
    <location>
        <begin position="64"/>
        <end position="70"/>
    </location>
</feature>
<feature type="strand" evidence="12">
    <location>
        <begin position="73"/>
        <end position="75"/>
    </location>
</feature>
<feature type="helix" evidence="13">
    <location>
        <begin position="78"/>
        <end position="80"/>
    </location>
</feature>
<feature type="turn" evidence="13">
    <location>
        <begin position="87"/>
        <end position="89"/>
    </location>
</feature>
<feature type="helix" evidence="13">
    <location>
        <begin position="92"/>
        <end position="94"/>
    </location>
</feature>
<feature type="turn" evidence="13">
    <location>
        <begin position="101"/>
        <end position="104"/>
    </location>
</feature>
<feature type="helix" evidence="13">
    <location>
        <begin position="105"/>
        <end position="137"/>
    </location>
</feature>
<feature type="helix" evidence="13">
    <location>
        <begin position="142"/>
        <end position="146"/>
    </location>
</feature>
<feature type="strand" evidence="13">
    <location>
        <begin position="150"/>
        <end position="152"/>
    </location>
</feature>
<feature type="turn" evidence="11">
    <location>
        <begin position="154"/>
        <end position="156"/>
    </location>
</feature>
<feature type="strand" evidence="14">
    <location>
        <begin position="159"/>
        <end position="161"/>
    </location>
</feature>
<feature type="strand" evidence="13">
    <location>
        <begin position="162"/>
        <end position="167"/>
    </location>
</feature>
<feature type="strand" evidence="13">
    <location>
        <begin position="170"/>
        <end position="176"/>
    </location>
</feature>
<feature type="strand" evidence="13">
    <location>
        <begin position="179"/>
        <end position="183"/>
    </location>
</feature>
<feature type="turn" evidence="13">
    <location>
        <begin position="184"/>
        <end position="186"/>
    </location>
</feature>
<feature type="strand" evidence="12">
    <location>
        <begin position="193"/>
        <end position="195"/>
    </location>
</feature>
<feature type="turn" evidence="13">
    <location>
        <begin position="199"/>
        <end position="201"/>
    </location>
</feature>
<feature type="strand" evidence="13">
    <location>
        <begin position="206"/>
        <end position="212"/>
    </location>
</feature>
<feature type="turn" evidence="13">
    <location>
        <begin position="216"/>
        <end position="218"/>
    </location>
</feature>
<feature type="strand" evidence="13">
    <location>
        <begin position="223"/>
        <end position="225"/>
    </location>
</feature>
<feature type="strand" evidence="13">
    <location>
        <begin position="230"/>
        <end position="234"/>
    </location>
</feature>
<feature type="turn" evidence="13">
    <location>
        <begin position="235"/>
        <end position="237"/>
    </location>
</feature>
<feature type="strand" evidence="13">
    <location>
        <begin position="238"/>
        <end position="242"/>
    </location>
</feature>
<feature type="turn" evidence="13">
    <location>
        <begin position="243"/>
        <end position="245"/>
    </location>
</feature>
<feature type="strand" evidence="13">
    <location>
        <begin position="249"/>
        <end position="251"/>
    </location>
</feature>
<feature type="strand" evidence="11">
    <location>
        <begin position="265"/>
        <end position="267"/>
    </location>
</feature>
<feature type="strand" evidence="13">
    <location>
        <begin position="268"/>
        <end position="271"/>
    </location>
</feature>
<name>UCRI_CHICK</name>
<sequence>MLSVAARSGPFAPYLSAAAHAVPGPLKALAPAALRAEKVVLDLKRPLLCRESMSGRSARRDLVAGISLNAPASVRYVHNDVTVPDFSAYRREDVMDATTSSQTSSEDRKGFSYLVTATACVATAYAAKNVVTQFISSLSASADVLALSKIEIKLSDIPEGKNVAFKWRGKPLFVRHRTQAEINQEAEVDVSKLRDPQHDLDRVKKPEWVILVGVCTHLGCVPIANSGDFGGYYCPCHGSHYDASGRIRKGPAPYNLEVPTYQFVGDDLVVVG</sequence>
<organism>
    <name type="scientific">Gallus gallus</name>
    <name type="common">Chicken</name>
    <dbReference type="NCBI Taxonomy" id="9031"/>
    <lineage>
        <taxon>Eukaryota</taxon>
        <taxon>Metazoa</taxon>
        <taxon>Chordata</taxon>
        <taxon>Craniata</taxon>
        <taxon>Vertebrata</taxon>
        <taxon>Euteleostomi</taxon>
        <taxon>Archelosauria</taxon>
        <taxon>Archosauria</taxon>
        <taxon>Dinosauria</taxon>
        <taxon>Saurischia</taxon>
        <taxon>Theropoda</taxon>
        <taxon>Coelurosauria</taxon>
        <taxon>Aves</taxon>
        <taxon>Neognathae</taxon>
        <taxon>Galloanserae</taxon>
        <taxon>Galliformes</taxon>
        <taxon>Phasianidae</taxon>
        <taxon>Phasianinae</taxon>
        <taxon>Gallus</taxon>
    </lineage>
</organism>
<accession>Q5ZLR5</accession>
<reference key="1">
    <citation type="journal article" date="2005" name="Genome Biol.">
        <title>Full-length cDNAs from chicken bursal lymphocytes to facilitate gene function analysis.</title>
        <authorList>
            <person name="Caldwell R.B."/>
            <person name="Kierzek A.M."/>
            <person name="Arakawa H."/>
            <person name="Bezzubov Y."/>
            <person name="Zaim J."/>
            <person name="Fiedler P."/>
            <person name="Kutter S."/>
            <person name="Blagodatski A."/>
            <person name="Kostovska D."/>
            <person name="Koter M."/>
            <person name="Plachy J."/>
            <person name="Carninci P."/>
            <person name="Hayashizaki Y."/>
            <person name="Buerstedde J.-M."/>
        </authorList>
    </citation>
    <scope>NUCLEOTIDE SEQUENCE [LARGE SCALE MRNA]</scope>
    <source>
        <strain>CB</strain>
        <tissue>Bursa of Fabricius</tissue>
    </source>
</reference>
<reference key="2">
    <citation type="journal article" date="1998" name="Nature">
        <title>Electron transfer by domain movement in cytochrome bc1.</title>
        <authorList>
            <person name="Zhang Z."/>
            <person name="Huang L."/>
            <person name="Shulmeister V.M."/>
            <person name="Chi Y.I."/>
            <person name="Kim K.K."/>
            <person name="Hung L.W."/>
            <person name="Crofts A.R."/>
            <person name="Berry E.A."/>
            <person name="Kim S.H."/>
        </authorList>
    </citation>
    <scope>X-RAY CRYSTALLOGRAPHY (3.16 ANGSTROMS) OF 77-272</scope>
    <scope>TRANSMEMBRANE HELIX</scope>
    <scope>SUBCELLULAR LOCATION</scope>
</reference>
<proteinExistence type="evidence at protein level"/>
<comment type="function">
    <molecule>Cytochrome b-c1 complex subunit Rieske, mitochondrial</molecule>
    <text evidence="1 3">Component of the ubiquinol-cytochrome c oxidoreductase, a multisubunit transmembrane complex that is part of the mitochondrial electron transport chain which drives oxidative phosphorylation. The respiratory chain contains 3 multisubunit complexes succinate dehydrogenase (complex II, CII), ubiquinol-cytochrome c oxidoreductase (cytochrome b-c1 complex, complex III, CIII) and cytochrome c oxidase (complex IV, CIV), that cooperate to transfer electrons derived from NADH and succinate to molecular oxygen, creating an electrochemical gradient over the inner membrane that drives transmembrane transport and the ATP synthase. The cytochrome b-c1 complex catalyzes electron transfer from ubiquinol to cytochrome c, linking this redox reaction to translocation of protons across the mitochondrial inner membrane, with protons being carried across the membrane as hydrogens on the quinol. In the process called Q cycle, 2 protons are consumed from the matrix, 4 protons are released into the intermembrane space and 2 electrons are passed to cytochrome c. The Rieske protein is a catalytic core subunit containing a [2Fe-2S] iron-sulfur cluster. It cycles between 2 conformational states during catalysis to transfer electrons from the quinol bound in the Q(0) site in cytochrome b to cytochrome c1 (By similarity). Incorporation of UQCRFS1 is the penultimate step in complex III assembly (By similarity).</text>
</comment>
<comment type="function">
    <molecule>Cytochrome b-c1 complex subunit 9</molecule>
    <text evidence="2 3 4">Component of the ubiquinol-cytochrome c oxidoreductase (cytochrome b-c1 complex, complex III, CIII). UQCRFS1 undergoes proteolytic processing once it is incorporated in the complex III dimer. One of the fragments, called subunit 9, corresponds to its mitochondrial targeting sequence (MTS) (By similarity). The proteolytic processing is necessary for the correct insertion of UQCRFS1 in the complex III dimer, but the persistence of UQCRFS1-derived fragments may prevent newly imported UQCRFS1 to be processed and assembled into complex III and is detrimental for the complex III structure and function (By similarity).</text>
</comment>
<comment type="catalytic activity">
    <reaction evidence="1">
        <text>a quinol + 2 Fe(III)-[cytochrome c](out) = a quinone + 2 Fe(II)-[cytochrome c](out) + 2 H(+)(out)</text>
        <dbReference type="Rhea" id="RHEA:11484"/>
        <dbReference type="Rhea" id="RHEA-COMP:10350"/>
        <dbReference type="Rhea" id="RHEA-COMP:14399"/>
        <dbReference type="ChEBI" id="CHEBI:15378"/>
        <dbReference type="ChEBI" id="CHEBI:24646"/>
        <dbReference type="ChEBI" id="CHEBI:29033"/>
        <dbReference type="ChEBI" id="CHEBI:29034"/>
        <dbReference type="ChEBI" id="CHEBI:132124"/>
        <dbReference type="EC" id="7.1.1.8"/>
    </reaction>
</comment>
<comment type="cofactor">
    <cofactor evidence="5">
        <name>[2Fe-2S] cluster</name>
        <dbReference type="ChEBI" id="CHEBI:190135"/>
    </cofactor>
    <text evidence="3 5">Binds 1 [2Fe-2S] cluster per subunit. Fe-S cluster delivery to the Rieske protein is mediated by components of the iron sulfur (Fe-S) cluster assembly machinery that reside in the mitochondrial matrix (including HSC20 and LYRM7) (By similarity).</text>
</comment>
<comment type="subunit">
    <molecule>Cytochrome b-c1 complex subunit Rieske, mitochondrial</molecule>
    <text evidence="2 3">Component of the ubiquinol-cytochrome c oxidoreductase (cytochrome b-c1 complex, complex III, CIII), a multisubunit enzyme composed of 11 subunits. The complex is composed of 3 respiratory subunits cytochrome b, cytochrome c1 and Rieske protein UQCRFS1, 2 core protein subunits UQCRC1/QCR1 and UQCRC2/QCR2, and 6 low-molecular weight protein subunits UQCRH/QCR6, UQCRB/QCR7, UQCRQ/QCR8, UQCR10/QCR9, UQCR11/QCR10 and subunit 9, the cleavage product of Rieske protein UQCRFS1. The complex exists as an obligatory dimer and forms supercomplexes (SCs) in the inner mitochondrial membrane with NADH-ubiquinone oxidoreductase (complex I, CI) and cytochrome c oxidase (complex IV, CIV), resulting in different assemblies (supercomplex SCI(1)III(2)IV(1) and megacomplex MCI(2)III(2)IV(2)) (By similarity). Incorporation of the Rieske protein UQCRFS1 is the penultimate step in complex III assembly. Interacts with TTC19, which is involved in the clearance of UQCRFS1 fragments (By similarity).</text>
</comment>
<comment type="subunit">
    <molecule>Cytochrome b-c1 complex subunit 9</molecule>
    <text evidence="2">Component of the ubiquinol-cytochrome c oxidoreductase (cytochrome b-c1 complex, complex III, CIII). Subunit 9 corresponds to the mitochondrial targeting sequence (MTS) of Rieske protein UQCRFS1. It is retained after processing and incorporated inside complex III, where it remains bound to the complex and localizes between the 2 core subunits UQCRC1/QCR1 and UQCRC2/QCR2.</text>
</comment>
<comment type="subcellular location">
    <subcellularLocation>
        <location evidence="6">Mitochondrion inner membrane</location>
        <topology evidence="6">Single-pass membrane protein</topology>
    </subcellularLocation>
</comment>
<comment type="PTM">
    <text evidence="4">Proteolytic processing is necessary for the correct insertion of UQCRFS1 in the complex III dimer. Several fragments are generated during UQCRFS1 insertion, most probably due to the endogenous matrix-processing peptidase (MPP) activity of the 2 core protein subunits UQCRC1/QCR1 and UQCRC2/QCR2, which are homologous to the 2 mitochondrial-processing peptidase (MPP) subunits beta-MPP and alpha-MPP respectively. The action of the protease is also necessary for the clearance of the UQCRFS1 fragments.</text>
</comment>
<comment type="miscellaneous">
    <text>The Rieske protein is a high potential 2Fe-2S protein.</text>
</comment>
<comment type="similarity">
    <text evidence="7">Belongs to the Rieske iron-sulfur protein family.</text>
</comment>
<comment type="caution">
    <text evidence="2 3">Several peptides are generated during UQCRFS1 insertion. According to some authors, the identification of the transit peptide as the subunit 9, does not necessary imply that it must be considered as a structural subunit of the complex III dimer as additional fragments from UQCRFS1 are also present.</text>
</comment>
<dbReference type="EC" id="7.1.1.8"/>
<dbReference type="EMBL" id="AJ719669">
    <property type="protein sequence ID" value="CAG31328.1"/>
    <property type="molecule type" value="mRNA"/>
</dbReference>
<dbReference type="RefSeq" id="NP_001005843.1">
    <property type="nucleotide sequence ID" value="NM_001005843.1"/>
</dbReference>
<dbReference type="PDB" id="1BCC">
    <property type="method" value="X-ray"/>
    <property type="resolution" value="3.16 A"/>
    <property type="chains" value="E=77-272"/>
</dbReference>
<dbReference type="PDB" id="2BCC">
    <property type="method" value="X-ray"/>
    <property type="resolution" value="3.50 A"/>
    <property type="chains" value="E=77-272"/>
</dbReference>
<dbReference type="PDB" id="3BCC">
    <property type="method" value="X-ray"/>
    <property type="resolution" value="3.70 A"/>
    <property type="chains" value="E=77-272"/>
</dbReference>
<dbReference type="PDB" id="3CWB">
    <property type="method" value="X-ray"/>
    <property type="resolution" value="3.51 A"/>
    <property type="chains" value="E/R=77-272, I/V=45-76"/>
</dbReference>
<dbReference type="PDB" id="3H1H">
    <property type="method" value="X-ray"/>
    <property type="resolution" value="3.16 A"/>
    <property type="chains" value="E/R=77-272, I/V=45-76"/>
</dbReference>
<dbReference type="PDB" id="3H1I">
    <property type="method" value="X-ray"/>
    <property type="resolution" value="3.53 A"/>
    <property type="chains" value="E/R=77-272, I/V=45-76"/>
</dbReference>
<dbReference type="PDB" id="3H1J">
    <property type="method" value="X-ray"/>
    <property type="resolution" value="3.00 A"/>
    <property type="chains" value="E/R=77-272, I/V=45-76"/>
</dbReference>
<dbReference type="PDB" id="3H1K">
    <property type="method" value="X-ray"/>
    <property type="resolution" value="3.48 A"/>
    <property type="chains" value="E/R=77-272, I/V=45-76"/>
</dbReference>
<dbReference type="PDB" id="3H1L">
    <property type="method" value="X-ray"/>
    <property type="resolution" value="3.21 A"/>
    <property type="chains" value="E/R=77-272, I/V=45-76"/>
</dbReference>
<dbReference type="PDB" id="3L70">
    <property type="method" value="X-ray"/>
    <property type="resolution" value="2.75 A"/>
    <property type="chains" value="E/R=77-272, I/V=45-76"/>
</dbReference>
<dbReference type="PDB" id="3L71">
    <property type="method" value="X-ray"/>
    <property type="resolution" value="2.84 A"/>
    <property type="chains" value="E/R=77-272, I/V=45-76"/>
</dbReference>
<dbReference type="PDB" id="3L72">
    <property type="method" value="X-ray"/>
    <property type="resolution" value="3.06 A"/>
    <property type="chains" value="E/R=77-272, I/V=45-76"/>
</dbReference>
<dbReference type="PDB" id="3L73">
    <property type="method" value="X-ray"/>
    <property type="resolution" value="3.04 A"/>
    <property type="chains" value="E/R=77-272, I/V=45-76"/>
</dbReference>
<dbReference type="PDB" id="3L74">
    <property type="method" value="X-ray"/>
    <property type="resolution" value="2.76 A"/>
    <property type="chains" value="E/R=77-272, I/V=45-76"/>
</dbReference>
<dbReference type="PDB" id="3L75">
    <property type="method" value="X-ray"/>
    <property type="resolution" value="2.79 A"/>
    <property type="chains" value="E/R=77-272, I/V=45-76"/>
</dbReference>
<dbReference type="PDB" id="3TGU">
    <property type="method" value="X-ray"/>
    <property type="resolution" value="2.70 A"/>
    <property type="chains" value="E/R=77-272, I/V=2-76"/>
</dbReference>
<dbReference type="PDB" id="4U3F">
    <property type="method" value="X-ray"/>
    <property type="resolution" value="3.23 A"/>
    <property type="chains" value="E/R=77-272, I/V=2-76"/>
</dbReference>
<dbReference type="PDBsum" id="1BCC"/>
<dbReference type="PDBsum" id="2BCC"/>
<dbReference type="PDBsum" id="3BCC"/>
<dbReference type="PDBsum" id="3CWB"/>
<dbReference type="PDBsum" id="3H1H"/>
<dbReference type="PDBsum" id="3H1I"/>
<dbReference type="PDBsum" id="3H1J"/>
<dbReference type="PDBsum" id="3H1K"/>
<dbReference type="PDBsum" id="3H1L"/>
<dbReference type="PDBsum" id="3L70"/>
<dbReference type="PDBsum" id="3L71"/>
<dbReference type="PDBsum" id="3L72"/>
<dbReference type="PDBsum" id="3L73"/>
<dbReference type="PDBsum" id="3L74"/>
<dbReference type="PDBsum" id="3L75"/>
<dbReference type="PDBsum" id="3TGU"/>
<dbReference type="PDBsum" id="4U3F"/>
<dbReference type="SMR" id="Q5ZLR5"/>
<dbReference type="FunCoup" id="Q5ZLR5">
    <property type="interactions" value="1803"/>
</dbReference>
<dbReference type="STRING" id="9031.ENSGALP00000041886"/>
<dbReference type="PaxDb" id="9031-ENSGALP00000041886"/>
<dbReference type="GeneID" id="415752"/>
<dbReference type="KEGG" id="gga:415752"/>
<dbReference type="CTD" id="7386"/>
<dbReference type="VEuPathDB" id="HostDB:geneid_415752"/>
<dbReference type="eggNOG" id="KOG1671">
    <property type="taxonomic scope" value="Eukaryota"/>
</dbReference>
<dbReference type="HOGENOM" id="CLU_055690_0_1_1"/>
<dbReference type="InParanoid" id="Q5ZLR5"/>
<dbReference type="OrthoDB" id="1637982at2759"/>
<dbReference type="PhylomeDB" id="Q5ZLR5"/>
<dbReference type="TreeFam" id="TF105037"/>
<dbReference type="Reactome" id="R-GGA-611105">
    <property type="pathway name" value="Respiratory electron transport"/>
</dbReference>
<dbReference type="Reactome" id="R-GGA-9865881">
    <property type="pathway name" value="Complex III assembly"/>
</dbReference>
<dbReference type="EvolutionaryTrace" id="Q5ZLR5"/>
<dbReference type="PRO" id="PR:Q5ZLR5"/>
<dbReference type="Proteomes" id="UP000000539">
    <property type="component" value="Chromosome 11"/>
</dbReference>
<dbReference type="Bgee" id="ENSGALG00000025819">
    <property type="expression patterns" value="Expressed in heart and 12 other cell types or tissues"/>
</dbReference>
<dbReference type="GO" id="GO:0005743">
    <property type="term" value="C:mitochondrial inner membrane"/>
    <property type="evidence" value="ECO:0007669"/>
    <property type="project" value="UniProtKB-SubCell"/>
</dbReference>
<dbReference type="GO" id="GO:0045275">
    <property type="term" value="C:respiratory chain complex III"/>
    <property type="evidence" value="ECO:0000318"/>
    <property type="project" value="GO_Central"/>
</dbReference>
<dbReference type="GO" id="GO:0051537">
    <property type="term" value="F:2 iron, 2 sulfur cluster binding"/>
    <property type="evidence" value="ECO:0007669"/>
    <property type="project" value="UniProtKB-KW"/>
</dbReference>
<dbReference type="GO" id="GO:0046872">
    <property type="term" value="F:metal ion binding"/>
    <property type="evidence" value="ECO:0007669"/>
    <property type="project" value="UniProtKB-KW"/>
</dbReference>
<dbReference type="GO" id="GO:0016491">
    <property type="term" value="F:oxidoreductase activity"/>
    <property type="evidence" value="ECO:0000318"/>
    <property type="project" value="GO_Central"/>
</dbReference>
<dbReference type="GO" id="GO:0008121">
    <property type="term" value="F:ubiquinol-cytochrome-c reductase activity"/>
    <property type="evidence" value="ECO:0007669"/>
    <property type="project" value="UniProtKB-EC"/>
</dbReference>
<dbReference type="GO" id="GO:0006122">
    <property type="term" value="P:mitochondrial electron transport, ubiquinol to cytochrome c"/>
    <property type="evidence" value="ECO:0000318"/>
    <property type="project" value="GO_Central"/>
</dbReference>
<dbReference type="CDD" id="cd03470">
    <property type="entry name" value="Rieske_cytochrome_bc1"/>
    <property type="match status" value="1"/>
</dbReference>
<dbReference type="FunFam" id="1.20.5.270:FF:000001">
    <property type="entry name" value="Cytochrome b-c1 complex subunit Rieske, mitochondrial"/>
    <property type="match status" value="1"/>
</dbReference>
<dbReference type="FunFam" id="2.10.210.10:FF:000001">
    <property type="entry name" value="Cytochrome b-c1 complex subunit Rieske, mitochondrial"/>
    <property type="match status" value="1"/>
</dbReference>
<dbReference type="FunFam" id="2.102.10.10:FF:000001">
    <property type="entry name" value="Cytochrome b-c1 complex subunit Rieske, mitochondrial"/>
    <property type="match status" value="1"/>
</dbReference>
<dbReference type="Gene3D" id="2.10.210.10">
    <property type="entry name" value="Cytochrome Bc1 Complex, Chain I"/>
    <property type="match status" value="1"/>
</dbReference>
<dbReference type="Gene3D" id="2.102.10.10">
    <property type="entry name" value="Rieske [2Fe-2S] iron-sulphur domain"/>
    <property type="match status" value="1"/>
</dbReference>
<dbReference type="Gene3D" id="1.20.5.270">
    <property type="entry name" value="Ubiquinol cytochrome reductase, transmembrane domain"/>
    <property type="match status" value="1"/>
</dbReference>
<dbReference type="InterPro" id="IPR037008">
    <property type="entry name" value="bc1_Rieske_TM_sf"/>
</dbReference>
<dbReference type="InterPro" id="IPR011070">
    <property type="entry name" value="Globular_prot_asu/bsu"/>
</dbReference>
<dbReference type="InterPro" id="IPR017941">
    <property type="entry name" value="Rieske_2Fe-2S"/>
</dbReference>
<dbReference type="InterPro" id="IPR036922">
    <property type="entry name" value="Rieske_2Fe-2S_sf"/>
</dbReference>
<dbReference type="InterPro" id="IPR014349">
    <property type="entry name" value="Rieske_Fe-S_prot"/>
</dbReference>
<dbReference type="InterPro" id="IPR005805">
    <property type="entry name" value="Rieske_Fe-S_prot_C"/>
</dbReference>
<dbReference type="InterPro" id="IPR004192">
    <property type="entry name" value="Rieske_TM"/>
</dbReference>
<dbReference type="InterPro" id="IPR006317">
    <property type="entry name" value="Ubiquinol_cyt_c_Rdtase_Fe-S-su"/>
</dbReference>
<dbReference type="InterPro" id="IPR015248">
    <property type="entry name" value="UQCRFS1_N"/>
</dbReference>
<dbReference type="NCBIfam" id="TIGR01416">
    <property type="entry name" value="Rieske_proteo"/>
    <property type="match status" value="1"/>
</dbReference>
<dbReference type="PANTHER" id="PTHR10134">
    <property type="entry name" value="CYTOCHROME B-C1 COMPLEX SUBUNIT RIESKE, MITOCHONDRIAL"/>
    <property type="match status" value="1"/>
</dbReference>
<dbReference type="Pfam" id="PF00355">
    <property type="entry name" value="Rieske"/>
    <property type="match status" value="1"/>
</dbReference>
<dbReference type="Pfam" id="PF09165">
    <property type="entry name" value="Ubiq-Cytc-red_N"/>
    <property type="match status" value="1"/>
</dbReference>
<dbReference type="Pfam" id="PF02921">
    <property type="entry name" value="UCR_TM"/>
    <property type="match status" value="1"/>
</dbReference>
<dbReference type="PRINTS" id="PR00162">
    <property type="entry name" value="RIESKE"/>
</dbReference>
<dbReference type="SUPFAM" id="SSF50022">
    <property type="entry name" value="ISP domain"/>
    <property type="match status" value="1"/>
</dbReference>
<dbReference type="SUPFAM" id="SSF81502">
    <property type="entry name" value="ISP transmembrane anchor"/>
    <property type="match status" value="1"/>
</dbReference>
<dbReference type="SUPFAM" id="SSF56568">
    <property type="entry name" value="Non-globular alpha+beta subunits of globular proteins"/>
    <property type="match status" value="1"/>
</dbReference>
<dbReference type="PROSITE" id="PS51296">
    <property type="entry name" value="RIESKE"/>
    <property type="match status" value="1"/>
</dbReference>
<protein>
    <recommendedName>
        <fullName>Cytochrome b-c1 complex subunit Rieske, mitochondrial</fullName>
        <ecNumber>7.1.1.8</ecNumber>
    </recommendedName>
    <alternativeName>
        <fullName>Complex III subunit 5</fullName>
    </alternativeName>
    <alternativeName>
        <fullName>Cytochrome b-c1 complex subunit 5</fullName>
    </alternativeName>
    <alternativeName>
        <fullName>Rieske iron-sulfur protein</fullName>
        <shortName>RISP</shortName>
    </alternativeName>
    <alternativeName>
        <fullName evidence="7">Rieske protein UQCRFS1</fullName>
    </alternativeName>
    <alternativeName>
        <fullName>Ubiquinol-cytochrome c reductase iron-sulfur subunit</fullName>
    </alternativeName>
    <component>
        <recommendedName>
            <fullName evidence="2">Cytochrome b-c1 complex subunit 9</fullName>
            <shortName evidence="2">Su9</shortName>
            <shortName evidence="2">Subunit 9</shortName>
        </recommendedName>
        <alternativeName>
            <fullName>Complex III subunit IX</fullName>
        </alternativeName>
        <alternativeName>
            <fullName>UQCRFS1 mitochondrial targeting sequence</fullName>
            <shortName>UQCRFS1 MTS</shortName>
        </alternativeName>
    </component>
</protein>
<gene>
    <name type="primary">UQCRFS1</name>
    <name type="ORF">RCJMB04_5b19</name>
</gene>
<evidence type="ECO:0000250" key="1">
    <source>
        <dbReference type="UniProtKB" id="P08067"/>
    </source>
</evidence>
<evidence type="ECO:0000250" key="2">
    <source>
        <dbReference type="UniProtKB" id="P13272"/>
    </source>
</evidence>
<evidence type="ECO:0000250" key="3">
    <source>
        <dbReference type="UniProtKB" id="P47985"/>
    </source>
</evidence>
<evidence type="ECO:0000250" key="4">
    <source>
        <dbReference type="UniProtKB" id="Q9CR68"/>
    </source>
</evidence>
<evidence type="ECO:0000255" key="5">
    <source>
        <dbReference type="PROSITE-ProRule" id="PRU00628"/>
    </source>
</evidence>
<evidence type="ECO:0000269" key="6">
    <source>
    </source>
</evidence>
<evidence type="ECO:0000305" key="7"/>
<evidence type="ECO:0007744" key="8">
    <source>
        <dbReference type="PDB" id="3H1H"/>
    </source>
</evidence>
<evidence type="ECO:0007744" key="9">
    <source>
        <dbReference type="PDB" id="3H1I"/>
    </source>
</evidence>
<evidence type="ECO:0007744" key="10">
    <source>
        <dbReference type="PDB" id="3H1J"/>
    </source>
</evidence>
<evidence type="ECO:0007829" key="11">
    <source>
        <dbReference type="PDB" id="3H1J"/>
    </source>
</evidence>
<evidence type="ECO:0007829" key="12">
    <source>
        <dbReference type="PDB" id="3L74"/>
    </source>
</evidence>
<evidence type="ECO:0007829" key="13">
    <source>
        <dbReference type="PDB" id="3TGU"/>
    </source>
</evidence>
<evidence type="ECO:0007829" key="14">
    <source>
        <dbReference type="PDB" id="4U3F"/>
    </source>
</evidence>
<keyword id="KW-0001">2Fe-2S</keyword>
<keyword id="KW-0002">3D-structure</keyword>
<keyword id="KW-1015">Disulfide bond</keyword>
<keyword id="KW-0249">Electron transport</keyword>
<keyword id="KW-0408">Iron</keyword>
<keyword id="KW-0411">Iron-sulfur</keyword>
<keyword id="KW-0472">Membrane</keyword>
<keyword id="KW-0479">Metal-binding</keyword>
<keyword id="KW-0496">Mitochondrion</keyword>
<keyword id="KW-0999">Mitochondrion inner membrane</keyword>
<keyword id="KW-1185">Reference proteome</keyword>
<keyword id="KW-0679">Respiratory chain</keyword>
<keyword id="KW-0809">Transit peptide</keyword>
<keyword id="KW-1278">Translocase</keyword>
<keyword id="KW-0812">Transmembrane</keyword>
<keyword id="KW-1133">Transmembrane helix</keyword>
<keyword id="KW-0813">Transport</keyword>